<protein>
    <recommendedName>
        <fullName evidence="1">PEP-dependent dihydroxyacetone kinase 1, phosphoryl donor subunit DhaM</fullName>
        <ecNumber evidence="1">2.7.1.121</ecNumber>
    </recommendedName>
    <alternativeName>
        <fullName evidence="1">PTS system EIIA component</fullName>
    </alternativeName>
    <alternativeName>
        <fullName evidence="1">Phosphotransferase enzyme IIA component</fullName>
    </alternativeName>
</protein>
<proteinExistence type="inferred from homology"/>
<accession>Q927E4</accession>
<reference key="1">
    <citation type="journal article" date="2001" name="Science">
        <title>Comparative genomics of Listeria species.</title>
        <authorList>
            <person name="Glaser P."/>
            <person name="Frangeul L."/>
            <person name="Buchrieser C."/>
            <person name="Rusniok C."/>
            <person name="Amend A."/>
            <person name="Baquero F."/>
            <person name="Berche P."/>
            <person name="Bloecker H."/>
            <person name="Brandt P."/>
            <person name="Chakraborty T."/>
            <person name="Charbit A."/>
            <person name="Chetouani F."/>
            <person name="Couve E."/>
            <person name="de Daruvar A."/>
            <person name="Dehoux P."/>
            <person name="Domann E."/>
            <person name="Dominguez-Bernal G."/>
            <person name="Duchaud E."/>
            <person name="Durant L."/>
            <person name="Dussurget O."/>
            <person name="Entian K.-D."/>
            <person name="Fsihi H."/>
            <person name="Garcia-del Portillo F."/>
            <person name="Garrido P."/>
            <person name="Gautier L."/>
            <person name="Goebel W."/>
            <person name="Gomez-Lopez N."/>
            <person name="Hain T."/>
            <person name="Hauf J."/>
            <person name="Jackson D."/>
            <person name="Jones L.-M."/>
            <person name="Kaerst U."/>
            <person name="Kreft J."/>
            <person name="Kuhn M."/>
            <person name="Kunst F."/>
            <person name="Kurapkat G."/>
            <person name="Madueno E."/>
            <person name="Maitournam A."/>
            <person name="Mata Vicente J."/>
            <person name="Ng E."/>
            <person name="Nedjari H."/>
            <person name="Nordsiek G."/>
            <person name="Novella S."/>
            <person name="de Pablos B."/>
            <person name="Perez-Diaz J.-C."/>
            <person name="Purcell R."/>
            <person name="Remmel B."/>
            <person name="Rose M."/>
            <person name="Schlueter T."/>
            <person name="Simoes N."/>
            <person name="Tierrez A."/>
            <person name="Vazquez-Boland J.-A."/>
            <person name="Voss H."/>
            <person name="Wehland J."/>
            <person name="Cossart P."/>
        </authorList>
    </citation>
    <scope>NUCLEOTIDE SEQUENCE [LARGE SCALE GENOMIC DNA]</scope>
    <source>
        <strain>ATCC BAA-680 / CLIP 11262</strain>
    </source>
</reference>
<reference key="2">
    <citation type="journal article" date="2012" name="J. Bacteriol.">
        <title>Novel listerial glycerol dehydrogenase- and phosphoenolpyruvate-dependent dihydroxyacetone kinase system connected to the pentose phosphate pathway.</title>
        <authorList>
            <person name="Monniot C."/>
            <person name="Zebre A.C."/>
            <person name="Ake F.M."/>
            <person name="Deutscher J."/>
            <person name="Milohanic E."/>
        </authorList>
    </citation>
    <scope>NOMENCLATURE</scope>
    <source>
        <strain>ATCC BAA-680 / CLIP 11262</strain>
    </source>
</reference>
<dbReference type="EC" id="2.7.1.121" evidence="1"/>
<dbReference type="EMBL" id="AL596173">
    <property type="protein sequence ID" value="CAC98071.1"/>
    <property type="molecule type" value="Genomic_DNA"/>
</dbReference>
<dbReference type="PIR" id="AG1787">
    <property type="entry name" value="AG1787"/>
</dbReference>
<dbReference type="SMR" id="Q927E4"/>
<dbReference type="STRING" id="272626.gene:17567232"/>
<dbReference type="KEGG" id="lin:lin2845"/>
<dbReference type="eggNOG" id="COG3412">
    <property type="taxonomic scope" value="Bacteria"/>
</dbReference>
<dbReference type="HOGENOM" id="CLU_045361_1_0_9"/>
<dbReference type="OrthoDB" id="7065393at2"/>
<dbReference type="Proteomes" id="UP000002513">
    <property type="component" value="Chromosome"/>
</dbReference>
<dbReference type="GO" id="GO:0005737">
    <property type="term" value="C:cytoplasm"/>
    <property type="evidence" value="ECO:0007669"/>
    <property type="project" value="UniProtKB-SubCell"/>
</dbReference>
<dbReference type="GO" id="GO:0016020">
    <property type="term" value="C:membrane"/>
    <property type="evidence" value="ECO:0007669"/>
    <property type="project" value="InterPro"/>
</dbReference>
<dbReference type="GO" id="GO:0047324">
    <property type="term" value="F:phosphoenolpyruvate-glycerone phosphotransferase activity"/>
    <property type="evidence" value="ECO:0000250"/>
    <property type="project" value="UniProtKB"/>
</dbReference>
<dbReference type="GO" id="GO:0019563">
    <property type="term" value="P:glycerol catabolic process"/>
    <property type="evidence" value="ECO:0007669"/>
    <property type="project" value="InterPro"/>
</dbReference>
<dbReference type="GO" id="GO:0009401">
    <property type="term" value="P:phosphoenolpyruvate-dependent sugar phosphotransferase system"/>
    <property type="evidence" value="ECO:0007669"/>
    <property type="project" value="UniProtKB-KW"/>
</dbReference>
<dbReference type="FunFam" id="3.40.50.510:FF:000005">
    <property type="entry name" value="PTS-dependent dihydroxyacetone kinase phosphotransferase subunit DhaM"/>
    <property type="match status" value="1"/>
</dbReference>
<dbReference type="Gene3D" id="3.40.50.510">
    <property type="entry name" value="Phosphotransferase system, mannose-type IIA component"/>
    <property type="match status" value="1"/>
</dbReference>
<dbReference type="InterPro" id="IPR039643">
    <property type="entry name" value="DhaM"/>
</dbReference>
<dbReference type="InterPro" id="IPR012844">
    <property type="entry name" value="DhaM_N"/>
</dbReference>
<dbReference type="InterPro" id="IPR004701">
    <property type="entry name" value="PTS_EIIA_man-typ"/>
</dbReference>
<dbReference type="InterPro" id="IPR036662">
    <property type="entry name" value="PTS_EIIA_man-typ_sf"/>
</dbReference>
<dbReference type="NCBIfam" id="TIGR02364">
    <property type="entry name" value="dha_pts"/>
    <property type="match status" value="1"/>
</dbReference>
<dbReference type="PANTHER" id="PTHR38594">
    <property type="entry name" value="PEP-DEPENDENT DIHYDROXYACETONE KINASE, PHOSPHORYL DONOR SUBUNIT DHAM"/>
    <property type="match status" value="1"/>
</dbReference>
<dbReference type="PANTHER" id="PTHR38594:SF1">
    <property type="entry name" value="PEP-DEPENDENT DIHYDROXYACETONE KINASE, PHOSPHORYL DONOR SUBUNIT DHAM"/>
    <property type="match status" value="1"/>
</dbReference>
<dbReference type="Pfam" id="PF03610">
    <property type="entry name" value="EIIA-man"/>
    <property type="match status" value="1"/>
</dbReference>
<dbReference type="SUPFAM" id="SSF53062">
    <property type="entry name" value="PTS system fructose IIA component-like"/>
    <property type="match status" value="1"/>
</dbReference>
<dbReference type="PROSITE" id="PS51096">
    <property type="entry name" value="PTS_EIIA_TYPE_4"/>
    <property type="match status" value="1"/>
</dbReference>
<organism>
    <name type="scientific">Listeria innocua serovar 6a (strain ATCC BAA-680 / CLIP 11262)</name>
    <dbReference type="NCBI Taxonomy" id="272626"/>
    <lineage>
        <taxon>Bacteria</taxon>
        <taxon>Bacillati</taxon>
        <taxon>Bacillota</taxon>
        <taxon>Bacilli</taxon>
        <taxon>Bacillales</taxon>
        <taxon>Listeriaceae</taxon>
        <taxon>Listeria</taxon>
    </lineage>
</organism>
<feature type="chain" id="PRO_0000439402" description="PEP-dependent dihydroxyacetone kinase 1, phosphoryl donor subunit DhaM">
    <location>
        <begin position="1"/>
        <end position="124"/>
    </location>
</feature>
<feature type="domain" description="PTS EIIA type-4" evidence="3">
    <location>
        <begin position="4"/>
        <end position="124"/>
    </location>
</feature>
<feature type="active site" description="Tele-phosphohistidine intermediate" evidence="3">
    <location>
        <position position="12"/>
    </location>
</feature>
<keyword id="KW-0963">Cytoplasm</keyword>
<keyword id="KW-0319">Glycerol metabolism</keyword>
<keyword id="KW-0418">Kinase</keyword>
<keyword id="KW-0598">Phosphotransferase system</keyword>
<keyword id="KW-0808">Transferase</keyword>
<gene>
    <name evidence="4" type="primary">dhaM-1</name>
    <name evidence="5" type="ordered locus">lin2845</name>
</gene>
<sequence length="124" mass="13437">MAKPYGVVIISHSKDVAKGVHDIIKEIAPDVSITHAGGTEDGRIGTSFDTVNEAIESNEADKVYTFYDLGSAKMNIETVEEISEKEIILFNAPILEGAYATAAQIQMDEKPEVIAANLKTIEIK</sequence>
<evidence type="ECO:0000250" key="1">
    <source>
        <dbReference type="UniProtKB" id="Q92ET9"/>
    </source>
</evidence>
<evidence type="ECO:0000250" key="2">
    <source>
        <dbReference type="UniProtKB" id="Q9CIV6"/>
    </source>
</evidence>
<evidence type="ECO:0000255" key="3">
    <source>
        <dbReference type="PROSITE-ProRule" id="PRU00419"/>
    </source>
</evidence>
<evidence type="ECO:0000303" key="4">
    <source>
    </source>
</evidence>
<evidence type="ECO:0000312" key="5">
    <source>
        <dbReference type="EMBL" id="CAC98071.1"/>
    </source>
</evidence>
<comment type="function">
    <text evidence="1">Component of the dihydroxyacetone kinase complex, which is responsible for the phosphoenolpyruvate (PEP)-dependent phosphorylation of dihydroxyacetone. DhaM serves as the phosphoryl donor. Is phosphorylated by phosphoenolpyruvate in an EI- and HPr-dependent reaction, and a phosphorelay system on histidine residues finally leads to phosphoryl transfer to DhaL and dihydroxyacetone.</text>
</comment>
<comment type="catalytic activity">
    <reaction evidence="1">
        <text>dihydroxyacetone + phosphoenolpyruvate = dihydroxyacetone phosphate + pyruvate</text>
        <dbReference type="Rhea" id="RHEA:18381"/>
        <dbReference type="ChEBI" id="CHEBI:15361"/>
        <dbReference type="ChEBI" id="CHEBI:16016"/>
        <dbReference type="ChEBI" id="CHEBI:57642"/>
        <dbReference type="ChEBI" id="CHEBI:58702"/>
        <dbReference type="EC" id="2.7.1.121"/>
    </reaction>
</comment>
<comment type="subunit">
    <text evidence="2">Homodimer. The dihydroxyacetone kinase complex is composed of a homodimer of DhaM, a homodimer of DhaK and the subunit DhaL.</text>
</comment>
<comment type="subcellular location">
    <subcellularLocation>
        <location evidence="1">Cytoplasm</location>
    </subcellularLocation>
</comment>
<comment type="domain">
    <text evidence="3">The EIIA type-4 domain is phosphorylated by phospho-HPr on a histidyl residue. Then, it transfers the phosphoryl group to the EIIB type-4 domain.</text>
</comment>
<comment type="miscellaneous">
    <text evidence="1">Unlike the carbohydrate-specific transporters of the PTS, the complex DhaKML has no transport activity.</text>
</comment>
<comment type="similarity">
    <text evidence="1">Belongs to the PEP-utilizing enzyme family.</text>
</comment>
<name>DHAM1_LISIN</name>